<keyword id="KW-0002">3D-structure</keyword>
<keyword id="KW-0496">Mitochondrion</keyword>
<keyword id="KW-1185">Reference proteome</keyword>
<name>RT13_NEUCR</name>
<proteinExistence type="evidence at protein level"/>
<gene>
    <name type="primary">mrp13</name>
    <name type="ORF">NCU06451</name>
</gene>
<protein>
    <recommendedName>
        <fullName evidence="2">Small ribosomal subunit protein mS27</fullName>
    </recommendedName>
</protein>
<sequence>MAGRAPQHALRVGCRAVPEALSKPAQQSRCLSSTVPRQATYPVVSFNKTSSPELKEALETLREKVILPTYLPPELRQKIFNKKYEKELAHDPVTIQIDGQPQRFSYINMLTDMPNTPKNIRAALLSMKNGGDFANLSGLLEGMHRANRKLPYWLSAQIVRKACKAGHLQLILNMVRDVKRTGFTLERHETVNELLFWIQRFAWKSDYSEPETRKALREVQEILDALEGDERHMSKDRKRQQALTRFPYHRDPQFLAARLNLTAELAARRAVTGQTSEQQLNSANDVKNLVKYAEQLVRLWPADKALLDMYTDEAYVARVDLRYLIKPQVHLRYASFTLQALKNAAKIVGQLGHGPLAAQLINRAAAVEAESQLAYAKVDDGMAGQKIYEMVVGGKK</sequence>
<organism>
    <name type="scientific">Neurospora crassa (strain ATCC 24698 / 74-OR23-1A / CBS 708.71 / DSM 1257 / FGSC 987)</name>
    <dbReference type="NCBI Taxonomy" id="367110"/>
    <lineage>
        <taxon>Eukaryota</taxon>
        <taxon>Fungi</taxon>
        <taxon>Dikarya</taxon>
        <taxon>Ascomycota</taxon>
        <taxon>Pezizomycotina</taxon>
        <taxon>Sordariomycetes</taxon>
        <taxon>Sordariomycetidae</taxon>
        <taxon>Sordariales</taxon>
        <taxon>Sordariaceae</taxon>
        <taxon>Neurospora</taxon>
    </lineage>
</organism>
<dbReference type="EMBL" id="CM002238">
    <property type="protein sequence ID" value="EAA28106.2"/>
    <property type="molecule type" value="Genomic_DNA"/>
</dbReference>
<dbReference type="RefSeq" id="XP_957342.2">
    <property type="nucleotide sequence ID" value="XM_952249.2"/>
</dbReference>
<dbReference type="PDB" id="6YW5">
    <property type="method" value="EM"/>
    <property type="resolution" value="2.85 A"/>
    <property type="chains" value="WW=1-396"/>
</dbReference>
<dbReference type="PDB" id="6YWE">
    <property type="method" value="EM"/>
    <property type="resolution" value="2.99 A"/>
    <property type="chains" value="WW=1-396"/>
</dbReference>
<dbReference type="PDB" id="6YWX">
    <property type="method" value="EM"/>
    <property type="resolution" value="3.10 A"/>
    <property type="chains" value="WW=1-396"/>
</dbReference>
<dbReference type="PDB" id="6YWY">
    <property type="method" value="EM"/>
    <property type="resolution" value="3.05 A"/>
    <property type="chains" value="WW=1-396"/>
</dbReference>
<dbReference type="PDBsum" id="6YW5"/>
<dbReference type="PDBsum" id="6YWE"/>
<dbReference type="PDBsum" id="6YWX"/>
<dbReference type="PDBsum" id="6YWY"/>
<dbReference type="EMDB" id="EMD-10958"/>
<dbReference type="EMDB" id="EMD-10965"/>
<dbReference type="EMDB" id="EMD-10978"/>
<dbReference type="EMDB" id="EMD-10985"/>
<dbReference type="SMR" id="Q7RYW7"/>
<dbReference type="STRING" id="367110.Q7RYW7"/>
<dbReference type="PaxDb" id="5141-EFNCRP00000006236"/>
<dbReference type="EnsemblFungi" id="EAA28106">
    <property type="protein sequence ID" value="EAA28106"/>
    <property type="gene ID" value="NCU06451"/>
</dbReference>
<dbReference type="GeneID" id="3873511"/>
<dbReference type="KEGG" id="ncr:NCU06451"/>
<dbReference type="VEuPathDB" id="FungiDB:NCU06451"/>
<dbReference type="HOGENOM" id="CLU_047846_1_0_1"/>
<dbReference type="InParanoid" id="Q7RYW7"/>
<dbReference type="OrthoDB" id="5405126at2759"/>
<dbReference type="Proteomes" id="UP000001805">
    <property type="component" value="Chromosome 3, Linkage Group III"/>
</dbReference>
<dbReference type="GO" id="GO:0005739">
    <property type="term" value="C:mitochondrion"/>
    <property type="evidence" value="ECO:0007669"/>
    <property type="project" value="UniProtKB-SubCell"/>
</dbReference>
<feature type="chain" id="PRO_0000458558" description="Small ribosomal subunit protein mS27">
    <location>
        <begin position="1"/>
        <end position="396"/>
    </location>
</feature>
<comment type="function">
    <text evidence="4">Component of the mitochondrial ribosome (mitoribosome), a dedicated translation machinery responsible for the synthesis of mitochondrial genome-encoded proteins, including at least some of the essential transmembrane subunits of the mitochondrial respiratory chain. The mitoribosomes are attached to the mitochondrial inner membrane and translation products are cotranslationally integrated into the membrane.</text>
</comment>
<comment type="subunit">
    <text evidence="1">Component of the mitochondrial small ribosomal subunit (mt-SSU). Mature N.crassa 74S mitochondrial ribosomes consist of a small (37S) and a large (54S) subunit. The 37S small subunit contains a 16S ribosomal RNA (16S mt-rRNA) and 32 different proteins. The 54S large subunit contains a 23S rRNA (23S mt-rRNA) and 42 different proteins.</text>
</comment>
<comment type="subcellular location">
    <subcellularLocation>
        <location evidence="1">Mitochondrion</location>
    </subcellularLocation>
</comment>
<comment type="similarity">
    <text evidence="3">Belongs to the mitochondrion-specific ribosomal protein mS27 family.</text>
</comment>
<reference key="1">
    <citation type="journal article" date="2003" name="Nature">
        <title>The genome sequence of the filamentous fungus Neurospora crassa.</title>
        <authorList>
            <person name="Galagan J.E."/>
            <person name="Calvo S.E."/>
            <person name="Borkovich K.A."/>
            <person name="Selker E.U."/>
            <person name="Read N.D."/>
            <person name="Jaffe D.B."/>
            <person name="FitzHugh W."/>
            <person name="Ma L.-J."/>
            <person name="Smirnov S."/>
            <person name="Purcell S."/>
            <person name="Rehman B."/>
            <person name="Elkins T."/>
            <person name="Engels R."/>
            <person name="Wang S."/>
            <person name="Nielsen C.B."/>
            <person name="Butler J."/>
            <person name="Endrizzi M."/>
            <person name="Qui D."/>
            <person name="Ianakiev P."/>
            <person name="Bell-Pedersen D."/>
            <person name="Nelson M.A."/>
            <person name="Werner-Washburne M."/>
            <person name="Selitrennikoff C.P."/>
            <person name="Kinsey J.A."/>
            <person name="Braun E.L."/>
            <person name="Zelter A."/>
            <person name="Schulte U."/>
            <person name="Kothe G.O."/>
            <person name="Jedd G."/>
            <person name="Mewes H.-W."/>
            <person name="Staben C."/>
            <person name="Marcotte E."/>
            <person name="Greenberg D."/>
            <person name="Roy A."/>
            <person name="Foley K."/>
            <person name="Naylor J."/>
            <person name="Stange-Thomann N."/>
            <person name="Barrett R."/>
            <person name="Gnerre S."/>
            <person name="Kamal M."/>
            <person name="Kamvysselis M."/>
            <person name="Mauceli E.W."/>
            <person name="Bielke C."/>
            <person name="Rudd S."/>
            <person name="Frishman D."/>
            <person name="Krystofova S."/>
            <person name="Rasmussen C."/>
            <person name="Metzenberg R.L."/>
            <person name="Perkins D.D."/>
            <person name="Kroken S."/>
            <person name="Cogoni C."/>
            <person name="Macino G."/>
            <person name="Catcheside D.E.A."/>
            <person name="Li W."/>
            <person name="Pratt R.J."/>
            <person name="Osmani S.A."/>
            <person name="DeSouza C.P.C."/>
            <person name="Glass N.L."/>
            <person name="Orbach M.J."/>
            <person name="Berglund J.A."/>
            <person name="Voelker R."/>
            <person name="Yarden O."/>
            <person name="Plamann M."/>
            <person name="Seiler S."/>
            <person name="Dunlap J.C."/>
            <person name="Radford A."/>
            <person name="Aramayo R."/>
            <person name="Natvig D.O."/>
            <person name="Alex L.A."/>
            <person name="Mannhaupt G."/>
            <person name="Ebbole D.J."/>
            <person name="Freitag M."/>
            <person name="Paulsen I."/>
            <person name="Sachs M.S."/>
            <person name="Lander E.S."/>
            <person name="Nusbaum C."/>
            <person name="Birren B.W."/>
        </authorList>
    </citation>
    <scope>NUCLEOTIDE SEQUENCE [LARGE SCALE GENOMIC DNA]</scope>
    <source>
        <strain>ATCC 24698 / 74-OR23-1A / CBS 708.71 / DSM 1257 / FGSC 987</strain>
    </source>
</reference>
<reference evidence="5 6" key="2">
    <citation type="journal article" date="2020" name="Nat. Commun.">
        <title>Analysis of translating mitoribosome reveals functional characteristics of translation in mitochondria of fungi.</title>
        <authorList>
            <person name="Itoh Y."/>
            <person name="Naschberger A."/>
            <person name="Mortezaei N."/>
            <person name="Herrmann J.M."/>
            <person name="Amunts A."/>
        </authorList>
    </citation>
    <scope>STRUCTURE BY ELECTRON MICROSCOPY (2.85 ANGSTROMS)</scope>
</reference>
<accession>Q7RYW7</accession>
<evidence type="ECO:0000269" key="1">
    <source>
    </source>
</evidence>
<evidence type="ECO:0000303" key="2">
    <source>
    </source>
</evidence>
<evidence type="ECO:0000305" key="3"/>
<evidence type="ECO:0000305" key="4">
    <source>
    </source>
</evidence>
<evidence type="ECO:0007744" key="5">
    <source>
        <dbReference type="PDB" id="6YW5"/>
    </source>
</evidence>
<evidence type="ECO:0007744" key="6">
    <source>
        <dbReference type="PDB" id="6YWE"/>
    </source>
</evidence>